<gene>
    <name evidence="1" type="primary">rplX</name>
    <name type="ordered locus">Tbd_0416</name>
</gene>
<dbReference type="EMBL" id="CP000116">
    <property type="protein sequence ID" value="AAZ96369.1"/>
    <property type="molecule type" value="Genomic_DNA"/>
</dbReference>
<dbReference type="RefSeq" id="WP_011310928.1">
    <property type="nucleotide sequence ID" value="NC_007404.1"/>
</dbReference>
<dbReference type="SMR" id="Q3SLN8"/>
<dbReference type="STRING" id="292415.Tbd_0416"/>
<dbReference type="KEGG" id="tbd:Tbd_0416"/>
<dbReference type="eggNOG" id="COG0198">
    <property type="taxonomic scope" value="Bacteria"/>
</dbReference>
<dbReference type="HOGENOM" id="CLU_093315_2_2_4"/>
<dbReference type="OrthoDB" id="9807419at2"/>
<dbReference type="Proteomes" id="UP000008291">
    <property type="component" value="Chromosome"/>
</dbReference>
<dbReference type="GO" id="GO:1990904">
    <property type="term" value="C:ribonucleoprotein complex"/>
    <property type="evidence" value="ECO:0007669"/>
    <property type="project" value="UniProtKB-KW"/>
</dbReference>
<dbReference type="GO" id="GO:0005840">
    <property type="term" value="C:ribosome"/>
    <property type="evidence" value="ECO:0007669"/>
    <property type="project" value="UniProtKB-KW"/>
</dbReference>
<dbReference type="GO" id="GO:0019843">
    <property type="term" value="F:rRNA binding"/>
    <property type="evidence" value="ECO:0007669"/>
    <property type="project" value="UniProtKB-UniRule"/>
</dbReference>
<dbReference type="GO" id="GO:0003735">
    <property type="term" value="F:structural constituent of ribosome"/>
    <property type="evidence" value="ECO:0007669"/>
    <property type="project" value="InterPro"/>
</dbReference>
<dbReference type="GO" id="GO:0006412">
    <property type="term" value="P:translation"/>
    <property type="evidence" value="ECO:0007669"/>
    <property type="project" value="UniProtKB-UniRule"/>
</dbReference>
<dbReference type="CDD" id="cd06089">
    <property type="entry name" value="KOW_RPL26"/>
    <property type="match status" value="1"/>
</dbReference>
<dbReference type="FunFam" id="2.30.30.30:FF:000004">
    <property type="entry name" value="50S ribosomal protein L24"/>
    <property type="match status" value="1"/>
</dbReference>
<dbReference type="Gene3D" id="2.30.30.30">
    <property type="match status" value="1"/>
</dbReference>
<dbReference type="HAMAP" id="MF_01326_B">
    <property type="entry name" value="Ribosomal_uL24_B"/>
    <property type="match status" value="1"/>
</dbReference>
<dbReference type="InterPro" id="IPR005824">
    <property type="entry name" value="KOW"/>
</dbReference>
<dbReference type="InterPro" id="IPR014722">
    <property type="entry name" value="Rib_uL2_dom2"/>
</dbReference>
<dbReference type="InterPro" id="IPR003256">
    <property type="entry name" value="Ribosomal_uL24"/>
</dbReference>
<dbReference type="InterPro" id="IPR041988">
    <property type="entry name" value="Ribosomal_uL24_KOW"/>
</dbReference>
<dbReference type="InterPro" id="IPR008991">
    <property type="entry name" value="Translation_prot_SH3-like_sf"/>
</dbReference>
<dbReference type="NCBIfam" id="TIGR01079">
    <property type="entry name" value="rplX_bact"/>
    <property type="match status" value="1"/>
</dbReference>
<dbReference type="PANTHER" id="PTHR12903">
    <property type="entry name" value="MITOCHONDRIAL RIBOSOMAL PROTEIN L24"/>
    <property type="match status" value="1"/>
</dbReference>
<dbReference type="Pfam" id="PF00467">
    <property type="entry name" value="KOW"/>
    <property type="match status" value="1"/>
</dbReference>
<dbReference type="Pfam" id="PF17136">
    <property type="entry name" value="ribosomal_L24"/>
    <property type="match status" value="1"/>
</dbReference>
<dbReference type="SMART" id="SM00739">
    <property type="entry name" value="KOW"/>
    <property type="match status" value="1"/>
</dbReference>
<dbReference type="SUPFAM" id="SSF50104">
    <property type="entry name" value="Translation proteins SH3-like domain"/>
    <property type="match status" value="1"/>
</dbReference>
<keyword id="KW-1185">Reference proteome</keyword>
<keyword id="KW-0687">Ribonucleoprotein</keyword>
<keyword id="KW-0689">Ribosomal protein</keyword>
<keyword id="KW-0694">RNA-binding</keyword>
<keyword id="KW-0699">rRNA-binding</keyword>
<organism>
    <name type="scientific">Thiobacillus denitrificans (strain ATCC 25259 / T1)</name>
    <dbReference type="NCBI Taxonomy" id="292415"/>
    <lineage>
        <taxon>Bacteria</taxon>
        <taxon>Pseudomonadati</taxon>
        <taxon>Pseudomonadota</taxon>
        <taxon>Betaproteobacteria</taxon>
        <taxon>Nitrosomonadales</taxon>
        <taxon>Thiobacillaceae</taxon>
        <taxon>Thiobacillus</taxon>
    </lineage>
</organism>
<comment type="function">
    <text evidence="1">One of two assembly initiator proteins, it binds directly to the 5'-end of the 23S rRNA, where it nucleates assembly of the 50S subunit.</text>
</comment>
<comment type="function">
    <text evidence="1">One of the proteins that surrounds the polypeptide exit tunnel on the outside of the subunit.</text>
</comment>
<comment type="subunit">
    <text evidence="1">Part of the 50S ribosomal subunit.</text>
</comment>
<comment type="similarity">
    <text evidence="1">Belongs to the universal ribosomal protein uL24 family.</text>
</comment>
<proteinExistence type="inferred from homology"/>
<feature type="chain" id="PRO_0000241680" description="Large ribosomal subunit protein uL24">
    <location>
        <begin position="1"/>
        <end position="107"/>
    </location>
</feature>
<accession>Q3SLN8</accession>
<evidence type="ECO:0000255" key="1">
    <source>
        <dbReference type="HAMAP-Rule" id="MF_01326"/>
    </source>
</evidence>
<evidence type="ECO:0000305" key="2"/>
<protein>
    <recommendedName>
        <fullName evidence="1">Large ribosomal subunit protein uL24</fullName>
    </recommendedName>
    <alternativeName>
        <fullName evidence="2">50S ribosomal protein L24</fullName>
    </alternativeName>
</protein>
<name>RL24_THIDA</name>
<sequence length="107" mass="11757">MARIRKSDQVIILAGKDKGKRGTVLRVLDDGHLVVEGVNRVKKHQKPNPMRNIQGGIVEKEMPIDASNVALFNPATQKADRVGSKVLEDGRKVRVFKSNGEMVDAQG</sequence>
<reference key="1">
    <citation type="journal article" date="2006" name="J. Bacteriol.">
        <title>The genome sequence of the obligately chemolithoautotrophic, facultatively anaerobic bacterium Thiobacillus denitrificans.</title>
        <authorList>
            <person name="Beller H.R."/>
            <person name="Chain P.S."/>
            <person name="Letain T.E."/>
            <person name="Chakicherla A."/>
            <person name="Larimer F.W."/>
            <person name="Richardson P.M."/>
            <person name="Coleman M.A."/>
            <person name="Wood A.P."/>
            <person name="Kelly D.P."/>
        </authorList>
    </citation>
    <scope>NUCLEOTIDE SEQUENCE [LARGE SCALE GENOMIC DNA]</scope>
    <source>
        <strain>ATCC 25259 / T1</strain>
    </source>
</reference>